<comment type="function">
    <text evidence="1">Probable ligand for integrin in the brain. This is a non catalytic metalloprotease-like protein (By similarity).</text>
</comment>
<comment type="subcellular location">
    <subcellularLocation>
        <location evidence="2">Cell membrane</location>
        <topology evidence="8">Single-pass type I membrane protein</topology>
    </subcellularLocation>
</comment>
<comment type="tissue specificity">
    <text>Low levels in adult tissues. Not detected in developing embryos.</text>
</comment>
<comment type="PTM">
    <text evidence="1">The precursor is cleaved by a furin endopeptidase.</text>
</comment>
<name>ADA22_XENLA</name>
<dbReference type="EMBL" id="AF032383">
    <property type="protein sequence ID" value="AAC61847.1"/>
    <property type="molecule type" value="mRNA"/>
</dbReference>
<dbReference type="EMBL" id="U78188">
    <property type="protein sequence ID" value="AAB87148.1"/>
    <property type="molecule type" value="mRNA"/>
</dbReference>
<dbReference type="RefSeq" id="NP_001080913.1">
    <property type="nucleotide sequence ID" value="NM_001087444.1"/>
</dbReference>
<dbReference type="SMR" id="O42596"/>
<dbReference type="MEROPS" id="M12.978"/>
<dbReference type="GlyCosmos" id="O42596">
    <property type="glycosylation" value="6 sites, No reported glycans"/>
</dbReference>
<dbReference type="GeneID" id="386621"/>
<dbReference type="KEGG" id="xla:386621"/>
<dbReference type="AGR" id="Xenbase:XB-GENE-957020"/>
<dbReference type="CTD" id="386621"/>
<dbReference type="Xenbase" id="XB-GENE-957020">
    <property type="gene designation" value="adam22.L"/>
</dbReference>
<dbReference type="OrthoDB" id="5951731at2759"/>
<dbReference type="Proteomes" id="UP000186698">
    <property type="component" value="Chromosome 6L"/>
</dbReference>
<dbReference type="Bgee" id="386621">
    <property type="expression patterns" value="Expressed in brain and 12 other cell types or tissues"/>
</dbReference>
<dbReference type="GO" id="GO:0098839">
    <property type="term" value="C:postsynaptic density membrane"/>
    <property type="evidence" value="ECO:0000318"/>
    <property type="project" value="GO_Central"/>
</dbReference>
<dbReference type="GO" id="GO:0004222">
    <property type="term" value="F:metalloendopeptidase activity"/>
    <property type="evidence" value="ECO:0000318"/>
    <property type="project" value="GO_Central"/>
</dbReference>
<dbReference type="GO" id="GO:0006508">
    <property type="term" value="P:proteolysis"/>
    <property type="evidence" value="ECO:0000318"/>
    <property type="project" value="GO_Central"/>
</dbReference>
<dbReference type="CDD" id="cd04269">
    <property type="entry name" value="ZnMc_adamalysin_II_like"/>
    <property type="match status" value="1"/>
</dbReference>
<dbReference type="FunFam" id="3.40.390.10:FF:000014">
    <property type="entry name" value="disintegrin and metalloproteinase domain-containing protein 11"/>
    <property type="match status" value="1"/>
</dbReference>
<dbReference type="FunFam" id="4.10.70.10:FF:000001">
    <property type="entry name" value="Disintegrin and metalloproteinase domain-containing protein 22"/>
    <property type="match status" value="1"/>
</dbReference>
<dbReference type="Gene3D" id="3.40.390.10">
    <property type="entry name" value="Collagenase (Catalytic Domain)"/>
    <property type="match status" value="1"/>
</dbReference>
<dbReference type="Gene3D" id="4.10.70.10">
    <property type="entry name" value="Disintegrin domain"/>
    <property type="match status" value="1"/>
</dbReference>
<dbReference type="Gene3D" id="2.10.25.10">
    <property type="entry name" value="Laminin"/>
    <property type="match status" value="1"/>
</dbReference>
<dbReference type="InterPro" id="IPR006586">
    <property type="entry name" value="ADAM_Cys-rich"/>
</dbReference>
<dbReference type="InterPro" id="IPR018358">
    <property type="entry name" value="Disintegrin_CS"/>
</dbReference>
<dbReference type="InterPro" id="IPR001762">
    <property type="entry name" value="Disintegrin_dom"/>
</dbReference>
<dbReference type="InterPro" id="IPR036436">
    <property type="entry name" value="Disintegrin_dom_sf"/>
</dbReference>
<dbReference type="InterPro" id="IPR000742">
    <property type="entry name" value="EGF-like_dom"/>
</dbReference>
<dbReference type="InterPro" id="IPR024079">
    <property type="entry name" value="MetalloPept_cat_dom_sf"/>
</dbReference>
<dbReference type="InterPro" id="IPR001590">
    <property type="entry name" value="Peptidase_M12B"/>
</dbReference>
<dbReference type="InterPro" id="IPR002870">
    <property type="entry name" value="Peptidase_M12B_N"/>
</dbReference>
<dbReference type="InterPro" id="IPR034027">
    <property type="entry name" value="Reprolysin_adamalysin"/>
</dbReference>
<dbReference type="PANTHER" id="PTHR11905">
    <property type="entry name" value="ADAM A DISINTEGRIN AND METALLOPROTEASE DOMAIN"/>
    <property type="match status" value="1"/>
</dbReference>
<dbReference type="PANTHER" id="PTHR11905:SF14">
    <property type="entry name" value="DISINTEGRIN AND METALLOPROTEINASE DOMAIN-CONTAINING PROTEIN 22"/>
    <property type="match status" value="1"/>
</dbReference>
<dbReference type="Pfam" id="PF08516">
    <property type="entry name" value="ADAM_CR"/>
    <property type="match status" value="1"/>
</dbReference>
<dbReference type="Pfam" id="PF00200">
    <property type="entry name" value="Disintegrin"/>
    <property type="match status" value="1"/>
</dbReference>
<dbReference type="Pfam" id="PF01562">
    <property type="entry name" value="Pep_M12B_propep"/>
    <property type="match status" value="1"/>
</dbReference>
<dbReference type="Pfam" id="PF01421">
    <property type="entry name" value="Reprolysin"/>
    <property type="match status" value="1"/>
</dbReference>
<dbReference type="PRINTS" id="PR00289">
    <property type="entry name" value="DISINTEGRIN"/>
</dbReference>
<dbReference type="SMART" id="SM00608">
    <property type="entry name" value="ACR"/>
    <property type="match status" value="1"/>
</dbReference>
<dbReference type="SMART" id="SM00050">
    <property type="entry name" value="DISIN"/>
    <property type="match status" value="1"/>
</dbReference>
<dbReference type="SUPFAM" id="SSF57552">
    <property type="entry name" value="Blood coagulation inhibitor (disintegrin)"/>
    <property type="match status" value="1"/>
</dbReference>
<dbReference type="SUPFAM" id="SSF55486">
    <property type="entry name" value="Metalloproteases ('zincins'), catalytic domain"/>
    <property type="match status" value="1"/>
</dbReference>
<dbReference type="PROSITE" id="PS50215">
    <property type="entry name" value="ADAM_MEPRO"/>
    <property type="match status" value="1"/>
</dbReference>
<dbReference type="PROSITE" id="PS00427">
    <property type="entry name" value="DISINTEGRIN_1"/>
    <property type="match status" value="1"/>
</dbReference>
<dbReference type="PROSITE" id="PS50214">
    <property type="entry name" value="DISINTEGRIN_2"/>
    <property type="match status" value="1"/>
</dbReference>
<dbReference type="PROSITE" id="PS00022">
    <property type="entry name" value="EGF_1"/>
    <property type="match status" value="1"/>
</dbReference>
<dbReference type="PROSITE" id="PS50026">
    <property type="entry name" value="EGF_3"/>
    <property type="match status" value="1"/>
</dbReference>
<feature type="signal peptide" evidence="3">
    <location>
        <begin position="1"/>
        <end position="24"/>
    </location>
</feature>
<feature type="propeptide" id="PRO_0000029116" evidence="1">
    <location>
        <begin position="25"/>
        <end position="227"/>
    </location>
</feature>
<feature type="chain" id="PRO_0000029117" description="Disintegrin and metalloproteinase domain-containing protein 22">
    <location>
        <begin position="228"/>
        <end position="935"/>
    </location>
</feature>
<feature type="topological domain" description="Extracellular" evidence="3">
    <location>
        <begin position="228"/>
        <end position="736"/>
    </location>
</feature>
<feature type="transmembrane region" description="Helical" evidence="3">
    <location>
        <begin position="737"/>
        <end position="757"/>
    </location>
</feature>
<feature type="topological domain" description="Cytoplasmic" evidence="3">
    <location>
        <begin position="758"/>
        <end position="935"/>
    </location>
</feature>
<feature type="domain" description="Peptidase M12B" evidence="6">
    <location>
        <begin position="241"/>
        <end position="440"/>
    </location>
</feature>
<feature type="domain" description="Disintegrin" evidence="4">
    <location>
        <begin position="446"/>
        <end position="533"/>
    </location>
</feature>
<feature type="domain" description="EGF-like" evidence="5">
    <location>
        <begin position="677"/>
        <end position="713"/>
    </location>
</feature>
<feature type="region of interest" description="Disordered" evidence="7">
    <location>
        <begin position="850"/>
        <end position="935"/>
    </location>
</feature>
<feature type="compositionally biased region" description="Polar residues" evidence="7">
    <location>
        <begin position="859"/>
        <end position="870"/>
    </location>
</feature>
<feature type="compositionally biased region" description="Basic residues" evidence="7">
    <location>
        <begin position="871"/>
        <end position="882"/>
    </location>
</feature>
<feature type="compositionally biased region" description="Low complexity" evidence="7">
    <location>
        <begin position="891"/>
        <end position="906"/>
    </location>
</feature>
<feature type="glycosylation site" description="N-linked (GlcNAc...) asparagine" evidence="3">
    <location>
        <position position="167"/>
    </location>
</feature>
<feature type="glycosylation site" description="N-linked (GlcNAc...) asparagine" evidence="3">
    <location>
        <position position="210"/>
    </location>
</feature>
<feature type="glycosylation site" description="N-linked (GlcNAc...) asparagine" evidence="3">
    <location>
        <position position="521"/>
    </location>
</feature>
<feature type="glycosylation site" description="N-linked (GlcNAc...) asparagine" evidence="3">
    <location>
        <position position="609"/>
    </location>
</feature>
<feature type="glycosylation site" description="N-linked (GlcNAc...) asparagine" evidence="3">
    <location>
        <position position="636"/>
    </location>
</feature>
<feature type="glycosylation site" description="N-linked (GlcNAc...) asparagine" evidence="3">
    <location>
        <position position="677"/>
    </location>
</feature>
<feature type="disulfide bond" evidence="1">
    <location>
        <begin position="351"/>
        <end position="435"/>
    </location>
</feature>
<feature type="disulfide bond" evidence="1">
    <location>
        <begin position="394"/>
        <end position="419"/>
    </location>
</feature>
<feature type="disulfide bond" evidence="1">
    <location>
        <begin position="396"/>
        <end position="403"/>
    </location>
</feature>
<feature type="disulfide bond" evidence="1">
    <location>
        <begin position="449"/>
        <end position="479"/>
    </location>
</feature>
<feature type="disulfide bond" evidence="1">
    <location>
        <begin position="460"/>
        <end position="476"/>
    </location>
</feature>
<feature type="disulfide bond" evidence="1">
    <location>
        <begin position="462"/>
        <end position="468"/>
    </location>
</feature>
<feature type="disulfide bond" evidence="1">
    <location>
        <begin position="475"/>
        <end position="496"/>
    </location>
</feature>
<feature type="disulfide bond" evidence="1">
    <location>
        <begin position="487"/>
        <end position="493"/>
    </location>
</feature>
<feature type="disulfide bond" evidence="1">
    <location>
        <begin position="492"/>
        <end position="518"/>
    </location>
</feature>
<feature type="disulfide bond" evidence="1">
    <location>
        <begin position="505"/>
        <end position="525"/>
    </location>
</feature>
<feature type="disulfide bond" evidence="1">
    <location>
        <begin position="512"/>
        <end position="544"/>
    </location>
</feature>
<feature type="disulfide bond" evidence="1">
    <location>
        <begin position="537"/>
        <end position="549"/>
    </location>
</feature>
<feature type="disulfide bond" evidence="1">
    <location>
        <begin position="556"/>
        <end position="607"/>
    </location>
</feature>
<feature type="disulfide bond" evidence="1">
    <location>
        <begin position="571"/>
        <end position="637"/>
    </location>
</feature>
<feature type="disulfide bond" evidence="1">
    <location>
        <begin position="585"/>
        <end position="595"/>
    </location>
</feature>
<feature type="disulfide bond" evidence="1">
    <location>
        <begin position="602"/>
        <end position="665"/>
    </location>
</feature>
<feature type="disulfide bond" evidence="1">
    <location>
        <begin position="659"/>
        <end position="670"/>
    </location>
</feature>
<feature type="disulfide bond" evidence="1">
    <location>
        <begin position="681"/>
        <end position="695"/>
    </location>
</feature>
<feature type="disulfide bond" evidence="1">
    <location>
        <begin position="689"/>
        <end position="701"/>
    </location>
</feature>
<feature type="disulfide bond" evidence="1">
    <location>
        <begin position="703"/>
        <end position="712"/>
    </location>
</feature>
<protein>
    <recommendedName>
        <fullName>Disintegrin and metalloproteinase domain-containing protein 22</fullName>
        <shortName>ADAM 22</shortName>
    </recommendedName>
    <alternativeName>
        <fullName>MDC11.2</fullName>
    </alternativeName>
    <alternativeName>
        <fullName>Metalloprotease-disintegrin MDC11b</fullName>
    </alternativeName>
</protein>
<sequence length="935" mass="104161">MHINGGPLASWICCVIGSIHLAHASTRPENGGTSGMQRKKENSVLGMEDTVPLRLIFSNEEDNQTTQGLLSTRVRAGSPQHQDQLTHVAQASFQIDAFGSSFILDVELNHDLLSSDYRERHVTQDGKTVEVKGGEHCYYQGQIRGKAKSFVALSTCNGLHGMFCDGNHTYLIEPGEKYNPNEDYQFHSVYKSKVLEFPLDELPSEFWALNDTSVRLSQQTRSQRKKRQTRRYPRNVEDETKYVELMIVNDHLMYKKHRLSVGHTNSYAKSVVNMADLIYKEQLNTRIVLVAMETWATDNKFSISENPLLTLKEFMKYRRDFIKDKSDAVHLFSGSQLRVAAVVLRILVEWCSLLKGGGVNEFGKPDVMAVTLAQSLAHNLGIFSDKKKLLSGECKCEDTWSGCIMGDIGYYLPSKFSVCNIEEYHEFLNNGGGACLFNKPLKLLDPPECGNGFVETGEECDCGTIAECAMEGEECCKKCTLTQDSECSDGLCCSNCKFNPKEMLCREAVNDCDIPETCTGNTSQCPANIHKLDGYSCESMQGLCFGGRCKTRDRQCKYIWGEKVSAADRYCYEKLNIEGTEKGNCGRNKETWIQCNKQDVLCGYLLCTNISNVPRLGELDGDVTSSSIVNQGKLYNCSGGHVKLDEDTDLGYVEDGTPCGTGMMCLEHRCLPIDSFNFSTCLGSTNKICSGHGVCSNEVRCICDRFWTGEDCSSYLHYDHIKPEGDNRDEGVISTNIIIGAIAGTILVLALVLGITAWGYKNYRRERQIPQGDYVKKPGDADSFYSDLPPGVSSNSASSSKKRSAILSHFQISACSIPHYSISQNISLFCRRSNGLSHSWSERIPDTKHVSDVCENGRPRSNSWQGNVTSSRKKLRGKRFRPRSNSTETLSPAKSPSSSTGSIASSRRYPYPMPPLPDEERKASKQSARLWETSI</sequence>
<organism>
    <name type="scientific">Xenopus laevis</name>
    <name type="common">African clawed frog</name>
    <dbReference type="NCBI Taxonomy" id="8355"/>
    <lineage>
        <taxon>Eukaryota</taxon>
        <taxon>Metazoa</taxon>
        <taxon>Chordata</taxon>
        <taxon>Craniata</taxon>
        <taxon>Vertebrata</taxon>
        <taxon>Euteleostomi</taxon>
        <taxon>Amphibia</taxon>
        <taxon>Batrachia</taxon>
        <taxon>Anura</taxon>
        <taxon>Pipoidea</taxon>
        <taxon>Pipidae</taxon>
        <taxon>Xenopodinae</taxon>
        <taxon>Xenopus</taxon>
        <taxon>Xenopus</taxon>
    </lineage>
</organism>
<proteinExistence type="evidence at transcript level"/>
<accession>O42596</accession>
<keyword id="KW-1003">Cell membrane</keyword>
<keyword id="KW-0165">Cleavage on pair of basic residues</keyword>
<keyword id="KW-1015">Disulfide bond</keyword>
<keyword id="KW-0245">EGF-like domain</keyword>
<keyword id="KW-0325">Glycoprotein</keyword>
<keyword id="KW-0472">Membrane</keyword>
<keyword id="KW-1185">Reference proteome</keyword>
<keyword id="KW-0732">Signal</keyword>
<keyword id="KW-0812">Transmembrane</keyword>
<keyword id="KW-1133">Transmembrane helix</keyword>
<reference key="1">
    <citation type="journal article" date="1998" name="Dev. Biol.">
        <title>Neural crest-specific and general expression of distinct metalloprotease-disintegrins in early Xenopus laevis development.</title>
        <authorList>
            <person name="Cai H."/>
            <person name="Kraetzschmar J."/>
            <person name="Alfandari D."/>
            <person name="Hunnicutt G."/>
            <person name="Blobel C.P."/>
        </authorList>
    </citation>
    <scope>NUCLEOTIDE SEQUENCE [MRNA]</scope>
    <source>
        <tissue>Testis</tissue>
    </source>
</reference>
<reference key="2">
    <citation type="journal article" date="1997" name="Dev. Biol.">
        <title>Identification of metalloprotease/disintegrins in Xenopus laevis testis with a potential role in fertilization.</title>
        <authorList>
            <person name="Shilling F.M."/>
            <person name="Kraetzschmar J."/>
            <person name="Cai H."/>
            <person name="Weskamp G."/>
            <person name="Gayko U."/>
            <person name="Leibow J."/>
            <person name="Myles D.G."/>
            <person name="Nuccitelli R."/>
            <person name="Blobel C.P."/>
        </authorList>
    </citation>
    <scope>NUCLEOTIDE SEQUENCE [MRNA] OF 464-511</scope>
    <source>
        <tissue>Testis</tissue>
    </source>
</reference>
<evidence type="ECO:0000250" key="1"/>
<evidence type="ECO:0000250" key="2">
    <source>
        <dbReference type="UniProtKB" id="Q9R1V6"/>
    </source>
</evidence>
<evidence type="ECO:0000255" key="3"/>
<evidence type="ECO:0000255" key="4">
    <source>
        <dbReference type="PROSITE-ProRule" id="PRU00068"/>
    </source>
</evidence>
<evidence type="ECO:0000255" key="5">
    <source>
        <dbReference type="PROSITE-ProRule" id="PRU00076"/>
    </source>
</evidence>
<evidence type="ECO:0000255" key="6">
    <source>
        <dbReference type="PROSITE-ProRule" id="PRU00276"/>
    </source>
</evidence>
<evidence type="ECO:0000256" key="7">
    <source>
        <dbReference type="SAM" id="MobiDB-lite"/>
    </source>
</evidence>
<evidence type="ECO:0000305" key="8"/>
<gene>
    <name type="primary">adam22</name>
    <name type="synonym">mdc11b</name>
</gene>